<keyword id="KW-0053">Apoptosis</keyword>
<keyword id="KW-0067">ATP-binding</keyword>
<keyword id="KW-1003">Cell membrane</keyword>
<keyword id="KW-0968">Cytoplasmic vesicle</keyword>
<keyword id="KW-1015">Disulfide bond</keyword>
<keyword id="KW-0325">Glycoprotein</keyword>
<keyword id="KW-0333">Golgi apparatus</keyword>
<keyword id="KW-0393">Immunoglobulin domain</keyword>
<keyword id="KW-0418">Kinase</keyword>
<keyword id="KW-0472">Membrane</keyword>
<keyword id="KW-0547">Nucleotide-binding</keyword>
<keyword id="KW-0597">Phosphoprotein</keyword>
<keyword id="KW-0675">Receptor</keyword>
<keyword id="KW-1185">Reference proteome</keyword>
<keyword id="KW-0677">Repeat</keyword>
<keyword id="KW-0732">Signal</keyword>
<keyword id="KW-0808">Transferase</keyword>
<keyword id="KW-0812">Transmembrane</keyword>
<keyword id="KW-1133">Transmembrane helix</keyword>
<keyword id="KW-0829">Tyrosine-protein kinase</keyword>
<keyword id="KW-0832">Ubl conjugation</keyword>
<feature type="signal peptide">
    <location>
        <begin position="1"/>
        <end position="14"/>
    </location>
</feature>
<feature type="chain" id="PRO_0000016793" description="Fibroblast growth factor receptor 2">
    <location>
        <begin position="15"/>
        <end position="813"/>
    </location>
</feature>
<feature type="topological domain" description="Extracellular" evidence="2">
    <location>
        <begin position="18"/>
        <end position="367"/>
    </location>
</feature>
<feature type="transmembrane region" description="Helical" evidence="2">
    <location>
        <begin position="368"/>
        <end position="388"/>
    </location>
</feature>
<feature type="topological domain" description="Cytoplasmic" evidence="2">
    <location>
        <begin position="389"/>
        <end position="813"/>
    </location>
</feature>
<feature type="domain" description="Ig-like C2-type 1">
    <location>
        <begin position="21"/>
        <end position="117"/>
    </location>
</feature>
<feature type="domain" description="Ig-like C2-type 2">
    <location>
        <begin position="145"/>
        <end position="237"/>
    </location>
</feature>
<feature type="domain" description="Ig-like C2-type 3">
    <location>
        <begin position="246"/>
        <end position="348"/>
    </location>
</feature>
<feature type="domain" description="Protein kinase" evidence="4">
    <location>
        <begin position="471"/>
        <end position="760"/>
    </location>
</feature>
<feature type="region of interest" description="Disordered" evidence="6">
    <location>
        <begin position="119"/>
        <end position="143"/>
    </location>
</feature>
<feature type="region of interest" description="Heparin-binding" evidence="1">
    <location>
        <begin position="152"/>
        <end position="169"/>
    </location>
</feature>
<feature type="region of interest" description="Disordered" evidence="6">
    <location>
        <begin position="771"/>
        <end position="801"/>
    </location>
</feature>
<feature type="compositionally biased region" description="Acidic residues" evidence="6">
    <location>
        <begin position="123"/>
        <end position="136"/>
    </location>
</feature>
<feature type="compositionally biased region" description="Low complexity" evidence="6">
    <location>
        <begin position="771"/>
        <end position="792"/>
    </location>
</feature>
<feature type="active site" description="Proton acceptor" evidence="4 5">
    <location>
        <position position="616"/>
    </location>
</feature>
<feature type="binding site" evidence="4">
    <location>
        <begin position="477"/>
        <end position="485"/>
    </location>
    <ligand>
        <name>ATP</name>
        <dbReference type="ChEBI" id="CHEBI:30616"/>
    </ligand>
</feature>
<feature type="binding site" evidence="4">
    <location>
        <position position="507"/>
    </location>
    <ligand>
        <name>ATP</name>
        <dbReference type="ChEBI" id="CHEBI:30616"/>
    </ligand>
</feature>
<feature type="binding site" evidence="4">
    <location>
        <begin position="555"/>
        <end position="557"/>
    </location>
    <ligand>
        <name>ATP</name>
        <dbReference type="ChEBI" id="CHEBI:30616"/>
    </ligand>
</feature>
<feature type="binding site" evidence="4">
    <location>
        <position position="561"/>
    </location>
    <ligand>
        <name>ATP</name>
        <dbReference type="ChEBI" id="CHEBI:30616"/>
    </ligand>
</feature>
<feature type="modified residue" description="Phosphotyrosine; by autocatalysis" evidence="1">
    <location>
        <position position="456"/>
    </location>
</feature>
<feature type="modified residue" description="Phosphotyrosine; by autocatalysis" evidence="1">
    <location>
        <position position="576"/>
    </location>
</feature>
<feature type="modified residue" description="Phosphotyrosine; by autocatalysis" evidence="1">
    <location>
        <position position="646"/>
    </location>
</feature>
<feature type="modified residue" description="Phosphotyrosine; by autocatalysis" evidence="1">
    <location>
        <position position="647"/>
    </location>
</feature>
<feature type="modified residue" description="Phosphotyrosine; by autocatalysis" evidence="1">
    <location>
        <position position="759"/>
    </location>
</feature>
<feature type="glycosylation site" description="N-linked (GlcNAc...) asparagine" evidence="2">
    <location>
        <position position="79"/>
    </location>
</feature>
<feature type="glycosylation site" description="N-linked (GlcNAc...) asparagine" evidence="2">
    <location>
        <position position="115"/>
    </location>
</feature>
<feature type="glycosylation site" description="N-linked (GlcNAc...) asparagine" evidence="2">
    <location>
        <position position="231"/>
    </location>
</feature>
<feature type="glycosylation site" description="N-linked (GlcNAc...) asparagine" evidence="2">
    <location>
        <position position="255"/>
    </location>
</feature>
<feature type="glycosylation site" description="N-linked (GlcNAc...) asparagine" evidence="2">
    <location>
        <position position="287"/>
    </location>
</feature>
<feature type="glycosylation site" description="N-linked (GlcNAc...) asparagine" evidence="2">
    <location>
        <position position="308"/>
    </location>
</feature>
<feature type="glycosylation site" description="N-linked (GlcNAc...) asparagine" evidence="2">
    <location>
        <position position="321"/>
    </location>
</feature>
<feature type="disulfide bond" evidence="3">
    <location>
        <begin position="58"/>
        <end position="103"/>
    </location>
</feature>
<feature type="disulfide bond" evidence="3">
    <location>
        <begin position="170"/>
        <end position="221"/>
    </location>
</feature>
<feature type="disulfide bond" evidence="3">
    <location>
        <begin position="268"/>
        <end position="332"/>
    </location>
</feature>
<sequence>MLLLALLAFLLVSRTIARPSYSMVDDTTPEPEEPPAKYQISKADVFPVLPGEPLDLRCPLADGPLVTWTKDGAKLEVNNRTLIVRTYLQIKESTTRDSGLYACSVLKNSHFFHVNVTEASSSGDDEDDNDGSEDFTNDNNNIRAPYWTNTEKMEKKLHAVSAANTVKLRCPAREPHPSNEWLKNGKEFKQEHRIGGYKVRNQHWSLIMESVVPSDKGIYTCIVENEHGSINHTYHLDVIERSSHRPILQAGLPANTTAVVGGDAEFVCKVYSDAQPHIRWVRYIEKNGSRFGVDGLPYFKVLKAAGVNVTDEEIEVLYVRNVSFEDAGEYTCIAGNSIGISQHSAWLTVHPAPVNPLEDNPVPYYMEIGIYSTGIFIIFCMVVVCVVCRMRQGAKKKKNFTGPPVHKLTKRIPLHRQVTVSADSSSSMNSTTPLVRITTRLLNSTDAMPLANVSEYELPHDPMWEFSRDKLTLGKPLGEGCFGQVVMAEALGIDKERPKESVTVAVKMLKDNATEKDLADLVSEMEMMKMIGKHKNIINLLGACTQGGTLYVIVEYAAKGNLRQYLRARRPLEMEYSFDVTRVPDEQMTFKDLVSCTYQIARGMEYLASQKCIHRDLAARNVLVTENNVMKIADFGLARDVNNIDYYKKTSNGRLPVKWMAPEALFDRVYTHQSDVWSFGVLMWEIFTLGGSPYPGIPVEELFKLLKEGHRMDKPANCTNELYMMMRDCWHAIPSHRPTFKQLVEDLDRILTLTTNEEYLDLSAPLEQYSPSFPDSSCSASSSSGDDSVFSPDPMPHDPCLPKFQHVNGVVKT</sequence>
<comment type="function">
    <text evidence="1">Tyrosine-protein kinase that acts as a cell-surface receptor for fibroblast growth factors and plays an essential role in the regulation of cell proliferation, differentiation, migration and apoptosis, and in the regulation of embryonic development. Required for normal embryonic patterning, limb bud development, lung morphogenesis, osteogenesis and skin development. Plays an essential role in the regulation of osteoblast differentiation, proliferation and apoptosis, and is required for normal skeleton development. Promotes cell proliferation in keratinocytes and immature osteoblasts, but promotes apoptosis in differentiated osteoblasts. Phosphorylates PLCG1, FRS2 and PAK4. Ligand binding leads to the activation of several signaling cascades. Activation of PLCG1 leads to the production of the cellular signaling molecules diacylglycerol and inositol 1,4,5-trisphosphate. Phosphorylation of FRS2 triggers recruitment of GRB2, GAB1, PIK3R1 and SOS1, and mediates activation of RAS, MAPK1/ERK2, MAPK3/ERK1 and the MAP kinase signaling pathway, as well as of the AKT1 signaling pathway. FGFR2 signaling is down-regulated by ubiquitination, internalization and degradation. Mutations that lead to constitutive kinase activation or impair normal FGFR2 maturation, internalization and degradation lead to aberrant signaling. Over-expressed FGFR2 promotes activation of STAT1 (By similarity).</text>
</comment>
<comment type="catalytic activity">
    <reaction evidence="5">
        <text>L-tyrosyl-[protein] + ATP = O-phospho-L-tyrosyl-[protein] + ADP + H(+)</text>
        <dbReference type="Rhea" id="RHEA:10596"/>
        <dbReference type="Rhea" id="RHEA-COMP:10136"/>
        <dbReference type="Rhea" id="RHEA-COMP:20101"/>
        <dbReference type="ChEBI" id="CHEBI:15378"/>
        <dbReference type="ChEBI" id="CHEBI:30616"/>
        <dbReference type="ChEBI" id="CHEBI:46858"/>
        <dbReference type="ChEBI" id="CHEBI:61978"/>
        <dbReference type="ChEBI" id="CHEBI:456216"/>
        <dbReference type="EC" id="2.7.10.1"/>
    </reaction>
</comment>
<comment type="activity regulation">
    <text evidence="1">Present in an inactive conformation in the absence of bound ligand. Ligand binding leads to dimerization and activation by autophosphorylation on tyrosine residues (By similarity).</text>
</comment>
<comment type="subunit">
    <text evidence="1">Monomer. Homodimer after ligand binding (By similarity).</text>
</comment>
<comment type="subcellular location">
    <subcellularLocation>
        <location>Cell membrane</location>
        <topology>Single-pass type I membrane protein</topology>
    </subcellularLocation>
    <subcellularLocation>
        <location evidence="1">Golgi apparatus</location>
    </subcellularLocation>
    <subcellularLocation>
        <location evidence="1">Cytoplasmic vesicle</location>
    </subcellularLocation>
    <text evidence="1">Detected on osteoblast plasma membrane lipid rafts. After ligand binding, the activated receptor is rapidly internalized and degraded (By similarity).</text>
</comment>
<comment type="tissue specificity">
    <text>Expressed in the anterior neural plate in early neurula stage embryos. Later in development, the protein is also expressed in the eye anlagen, midbrain-hindbrain boundary and otic vesicle.</text>
</comment>
<comment type="domain">
    <text evidence="1">The second and third Ig-like domains directly interact with fibroblast growth factors (FGF) and heparan sulfate proteoglycans.</text>
</comment>
<comment type="PTM">
    <text evidence="1">Autophosphorylated. Binding of FGF family members together with heparan sulfate proteoglycan or heparin promotes receptor dimerization and autophosphorylation on tyrosine residues. Autophosphorylation occurs in trans between the two FGFR molecules present in the dimer (By similarity).</text>
</comment>
<comment type="PTM">
    <text evidence="1">N-glycosylated in the endoplasmic reticulum. The N-glycan chains undergo further maturation to an Endo H-resistant form in the Golgi apparatus (By similarity).</text>
</comment>
<comment type="PTM">
    <text evidence="1">Ubiquitinated. FGFR2 is rapidly ubiquitinated after autophosphorylation, leading to internalization and degradation. Subject to degradation both in lysosomes and by the proteasome (By similarity).</text>
</comment>
<comment type="similarity">
    <text evidence="4">Belongs to the protein kinase superfamily. Tyr protein kinase family. Fibroblast growth factor receptor subfamily.</text>
</comment>
<evidence type="ECO:0000250" key="1"/>
<evidence type="ECO:0000255" key="2"/>
<evidence type="ECO:0000255" key="3">
    <source>
        <dbReference type="PROSITE-ProRule" id="PRU00114"/>
    </source>
</evidence>
<evidence type="ECO:0000255" key="4">
    <source>
        <dbReference type="PROSITE-ProRule" id="PRU00159"/>
    </source>
</evidence>
<evidence type="ECO:0000255" key="5">
    <source>
        <dbReference type="PROSITE-ProRule" id="PRU10028"/>
    </source>
</evidence>
<evidence type="ECO:0000256" key="6">
    <source>
        <dbReference type="SAM" id="MobiDB-lite"/>
    </source>
</evidence>
<reference key="1">
    <citation type="journal article" date="1992" name="Development">
        <title>Spatially restricted expression of fibroblast growth factor receptor-2 during Xenopus development.</title>
        <authorList>
            <person name="Friesel R."/>
            <person name="Brown S.A.N."/>
        </authorList>
    </citation>
    <scope>NUCLEOTIDE SEQUENCE [MRNA]</scope>
</reference>
<name>FGFR2_XENLA</name>
<accession>Q03364</accession>
<dbReference type="EC" id="2.7.10.1"/>
<dbReference type="EMBL" id="X65943">
    <property type="protein sequence ID" value="CAA46758.1"/>
    <property type="molecule type" value="mRNA"/>
</dbReference>
<dbReference type="PIR" id="A49123">
    <property type="entry name" value="A49123"/>
</dbReference>
<dbReference type="SMR" id="Q03364"/>
<dbReference type="GlyCosmos" id="Q03364">
    <property type="glycosylation" value="7 sites, No reported glycans"/>
</dbReference>
<dbReference type="AGR" id="Xenbase:XB-GENE-1018301"/>
<dbReference type="Xenbase" id="XB-GENE-1018301">
    <property type="gene designation" value="fgfr2.L"/>
</dbReference>
<dbReference type="BRENDA" id="2.7.10.1">
    <property type="organism ID" value="6725"/>
</dbReference>
<dbReference type="Proteomes" id="UP000186698">
    <property type="component" value="Unplaced"/>
</dbReference>
<dbReference type="GO" id="GO:0031410">
    <property type="term" value="C:cytoplasmic vesicle"/>
    <property type="evidence" value="ECO:0007669"/>
    <property type="project" value="UniProtKB-KW"/>
</dbReference>
<dbReference type="GO" id="GO:0005794">
    <property type="term" value="C:Golgi apparatus"/>
    <property type="evidence" value="ECO:0007669"/>
    <property type="project" value="UniProtKB-SubCell"/>
</dbReference>
<dbReference type="GO" id="GO:0005886">
    <property type="term" value="C:plasma membrane"/>
    <property type="evidence" value="ECO:0000318"/>
    <property type="project" value="GO_Central"/>
</dbReference>
<dbReference type="GO" id="GO:0043235">
    <property type="term" value="C:receptor complex"/>
    <property type="evidence" value="ECO:0000318"/>
    <property type="project" value="GO_Central"/>
</dbReference>
<dbReference type="GO" id="GO:0005524">
    <property type="term" value="F:ATP binding"/>
    <property type="evidence" value="ECO:0007669"/>
    <property type="project" value="UniProtKB-KW"/>
</dbReference>
<dbReference type="GO" id="GO:0017134">
    <property type="term" value="F:fibroblast growth factor binding"/>
    <property type="evidence" value="ECO:0000318"/>
    <property type="project" value="GO_Central"/>
</dbReference>
<dbReference type="GO" id="GO:0005007">
    <property type="term" value="F:fibroblast growth factor receptor activity"/>
    <property type="evidence" value="ECO:0000318"/>
    <property type="project" value="GO_Central"/>
</dbReference>
<dbReference type="GO" id="GO:0001525">
    <property type="term" value="P:angiogenesis"/>
    <property type="evidence" value="ECO:0000318"/>
    <property type="project" value="GO_Central"/>
</dbReference>
<dbReference type="GO" id="GO:0006915">
    <property type="term" value="P:apoptotic process"/>
    <property type="evidence" value="ECO:0007669"/>
    <property type="project" value="UniProtKB-KW"/>
</dbReference>
<dbReference type="GO" id="GO:0008543">
    <property type="term" value="P:fibroblast growth factor receptor signaling pathway"/>
    <property type="evidence" value="ECO:0000318"/>
    <property type="project" value="GO_Central"/>
</dbReference>
<dbReference type="GO" id="GO:0008284">
    <property type="term" value="P:positive regulation of cell population proliferation"/>
    <property type="evidence" value="ECO:0000318"/>
    <property type="project" value="GO_Central"/>
</dbReference>
<dbReference type="GO" id="GO:0043410">
    <property type="term" value="P:positive regulation of MAPK cascade"/>
    <property type="evidence" value="ECO:0000318"/>
    <property type="project" value="GO_Central"/>
</dbReference>
<dbReference type="CDD" id="cd05857">
    <property type="entry name" value="IgI_2_FGFR"/>
    <property type="match status" value="1"/>
</dbReference>
<dbReference type="CDD" id="cd05101">
    <property type="entry name" value="PTKc_FGFR2"/>
    <property type="match status" value="1"/>
</dbReference>
<dbReference type="FunFam" id="1.10.510.10:FF:000007">
    <property type="entry name" value="Fibroblast growth factor receptor"/>
    <property type="match status" value="1"/>
</dbReference>
<dbReference type="FunFam" id="2.60.40.10:FF:000016">
    <property type="entry name" value="Fibroblast growth factor receptor"/>
    <property type="match status" value="1"/>
</dbReference>
<dbReference type="FunFam" id="2.60.40.10:FF:000020">
    <property type="entry name" value="Fibroblast growth factor receptor"/>
    <property type="match status" value="1"/>
</dbReference>
<dbReference type="FunFam" id="2.60.40.10:FF:000252">
    <property type="entry name" value="Fibroblast growth factor receptor"/>
    <property type="match status" value="1"/>
</dbReference>
<dbReference type="FunFam" id="3.30.200.20:FF:000011">
    <property type="entry name" value="Fibroblast growth factor receptor"/>
    <property type="match status" value="1"/>
</dbReference>
<dbReference type="Gene3D" id="2.60.40.10">
    <property type="entry name" value="Immunoglobulins"/>
    <property type="match status" value="3"/>
</dbReference>
<dbReference type="Gene3D" id="3.30.200.20">
    <property type="entry name" value="Phosphorylase Kinase, domain 1"/>
    <property type="match status" value="1"/>
</dbReference>
<dbReference type="Gene3D" id="1.10.510.10">
    <property type="entry name" value="Transferase(Phosphotransferase) domain 1"/>
    <property type="match status" value="1"/>
</dbReference>
<dbReference type="InterPro" id="IPR016248">
    <property type="entry name" value="FGF_rcpt_fam"/>
</dbReference>
<dbReference type="InterPro" id="IPR007110">
    <property type="entry name" value="Ig-like_dom"/>
</dbReference>
<dbReference type="InterPro" id="IPR036179">
    <property type="entry name" value="Ig-like_dom_sf"/>
</dbReference>
<dbReference type="InterPro" id="IPR013783">
    <property type="entry name" value="Ig-like_fold"/>
</dbReference>
<dbReference type="InterPro" id="IPR013098">
    <property type="entry name" value="Ig_I-set"/>
</dbReference>
<dbReference type="InterPro" id="IPR003599">
    <property type="entry name" value="Ig_sub"/>
</dbReference>
<dbReference type="InterPro" id="IPR003598">
    <property type="entry name" value="Ig_sub2"/>
</dbReference>
<dbReference type="InterPro" id="IPR011009">
    <property type="entry name" value="Kinase-like_dom_sf"/>
</dbReference>
<dbReference type="InterPro" id="IPR000719">
    <property type="entry name" value="Prot_kinase_dom"/>
</dbReference>
<dbReference type="InterPro" id="IPR017441">
    <property type="entry name" value="Protein_kinase_ATP_BS"/>
</dbReference>
<dbReference type="InterPro" id="IPR050122">
    <property type="entry name" value="RTK"/>
</dbReference>
<dbReference type="InterPro" id="IPR001245">
    <property type="entry name" value="Ser-Thr/Tyr_kinase_cat_dom"/>
</dbReference>
<dbReference type="InterPro" id="IPR008266">
    <property type="entry name" value="Tyr_kinase_AS"/>
</dbReference>
<dbReference type="InterPro" id="IPR020635">
    <property type="entry name" value="Tyr_kinase_cat_dom"/>
</dbReference>
<dbReference type="PANTHER" id="PTHR24416:SF130">
    <property type="entry name" value="FIBROBLAST GROWTH FACTOR RECEPTOR 2"/>
    <property type="match status" value="1"/>
</dbReference>
<dbReference type="PANTHER" id="PTHR24416">
    <property type="entry name" value="TYROSINE-PROTEIN KINASE RECEPTOR"/>
    <property type="match status" value="1"/>
</dbReference>
<dbReference type="Pfam" id="PF07679">
    <property type="entry name" value="I-set"/>
    <property type="match status" value="2"/>
</dbReference>
<dbReference type="Pfam" id="PF07714">
    <property type="entry name" value="PK_Tyr_Ser-Thr"/>
    <property type="match status" value="1"/>
</dbReference>
<dbReference type="PIRSF" id="PIRSF000628">
    <property type="entry name" value="FGFR"/>
    <property type="match status" value="1"/>
</dbReference>
<dbReference type="PRINTS" id="PR00109">
    <property type="entry name" value="TYRKINASE"/>
</dbReference>
<dbReference type="SMART" id="SM00409">
    <property type="entry name" value="IG"/>
    <property type="match status" value="3"/>
</dbReference>
<dbReference type="SMART" id="SM00408">
    <property type="entry name" value="IGc2"/>
    <property type="match status" value="3"/>
</dbReference>
<dbReference type="SMART" id="SM00219">
    <property type="entry name" value="TyrKc"/>
    <property type="match status" value="1"/>
</dbReference>
<dbReference type="SUPFAM" id="SSF48726">
    <property type="entry name" value="Immunoglobulin"/>
    <property type="match status" value="3"/>
</dbReference>
<dbReference type="SUPFAM" id="SSF56112">
    <property type="entry name" value="Protein kinase-like (PK-like)"/>
    <property type="match status" value="1"/>
</dbReference>
<dbReference type="PROSITE" id="PS50835">
    <property type="entry name" value="IG_LIKE"/>
    <property type="match status" value="3"/>
</dbReference>
<dbReference type="PROSITE" id="PS00107">
    <property type="entry name" value="PROTEIN_KINASE_ATP"/>
    <property type="match status" value="1"/>
</dbReference>
<dbReference type="PROSITE" id="PS50011">
    <property type="entry name" value="PROTEIN_KINASE_DOM"/>
    <property type="match status" value="1"/>
</dbReference>
<dbReference type="PROSITE" id="PS00109">
    <property type="entry name" value="PROTEIN_KINASE_TYR"/>
    <property type="match status" value="1"/>
</dbReference>
<organism>
    <name type="scientific">Xenopus laevis</name>
    <name type="common">African clawed frog</name>
    <dbReference type="NCBI Taxonomy" id="8355"/>
    <lineage>
        <taxon>Eukaryota</taxon>
        <taxon>Metazoa</taxon>
        <taxon>Chordata</taxon>
        <taxon>Craniata</taxon>
        <taxon>Vertebrata</taxon>
        <taxon>Euteleostomi</taxon>
        <taxon>Amphibia</taxon>
        <taxon>Batrachia</taxon>
        <taxon>Anura</taxon>
        <taxon>Pipoidea</taxon>
        <taxon>Pipidae</taxon>
        <taxon>Xenopodinae</taxon>
        <taxon>Xenopus</taxon>
        <taxon>Xenopus</taxon>
    </lineage>
</organism>
<protein>
    <recommendedName>
        <fullName>Fibroblast growth factor receptor 2</fullName>
        <shortName>FGFR-2</shortName>
        <ecNumber>2.7.10.1</ecNumber>
    </recommendedName>
</protein>
<gene>
    <name type="primary">fgfr2</name>
</gene>
<proteinExistence type="evidence at transcript level"/>